<accession>B5BJ69</accession>
<sequence>MEAIKGSDVNVPDAVFAWLLDGRGGVKPLEDNDVIDSQHPCWLHLNYTHPDSARWLASTPLLPNNVRDALAGESSRPRVSRMGEGTLITLRCINGSTDERPDQLVAMRLYMDERFIVSTRQRKVLALDDVVSDLQEGTGPVDCGGWLVDVCDALTDHASEFIEELHDKIIDLEDNLLDQQIPPRGFLALLRKQLIVMRRYMAPQRDVYARLASERLPWMSDDHRRRMQDIADRLGRGLDEIDACIARTGIMADEIAQVMQESLARRTYTMSLMAMVFLPSTFLTGLFGVNLGGIPGGGWRFGFSLFCILLVVLIGGVTLWLHRSKWL</sequence>
<evidence type="ECO:0000255" key="1">
    <source>
        <dbReference type="HAMAP-Rule" id="MF_01565"/>
    </source>
</evidence>
<organism>
    <name type="scientific">Salmonella paratyphi A (strain AKU_12601)</name>
    <dbReference type="NCBI Taxonomy" id="554290"/>
    <lineage>
        <taxon>Bacteria</taxon>
        <taxon>Pseudomonadati</taxon>
        <taxon>Pseudomonadota</taxon>
        <taxon>Gammaproteobacteria</taxon>
        <taxon>Enterobacterales</taxon>
        <taxon>Enterobacteriaceae</taxon>
        <taxon>Salmonella</taxon>
    </lineage>
</organism>
<protein>
    <recommendedName>
        <fullName evidence="1">Zinc transport protein ZntB</fullName>
    </recommendedName>
</protein>
<proteinExistence type="inferred from homology"/>
<gene>
    <name evidence="1" type="primary">zntB</name>
    <name type="ordered locus">SSPA1139</name>
</gene>
<name>ZNTB_SALPK</name>
<dbReference type="EMBL" id="FM200053">
    <property type="protein sequence ID" value="CAR59301.1"/>
    <property type="molecule type" value="Genomic_DNA"/>
</dbReference>
<dbReference type="RefSeq" id="WP_000387373.1">
    <property type="nucleotide sequence ID" value="NC_011147.1"/>
</dbReference>
<dbReference type="SMR" id="B5BJ69"/>
<dbReference type="KEGG" id="sek:SSPA1139"/>
<dbReference type="HOGENOM" id="CLU_007127_2_0_6"/>
<dbReference type="Proteomes" id="UP000001869">
    <property type="component" value="Chromosome"/>
</dbReference>
<dbReference type="GO" id="GO:0005886">
    <property type="term" value="C:plasma membrane"/>
    <property type="evidence" value="ECO:0007669"/>
    <property type="project" value="UniProtKB-SubCell"/>
</dbReference>
<dbReference type="GO" id="GO:0050897">
    <property type="term" value="F:cobalt ion binding"/>
    <property type="evidence" value="ECO:0007669"/>
    <property type="project" value="TreeGrafter"/>
</dbReference>
<dbReference type="GO" id="GO:0015087">
    <property type="term" value="F:cobalt ion transmembrane transporter activity"/>
    <property type="evidence" value="ECO:0007669"/>
    <property type="project" value="TreeGrafter"/>
</dbReference>
<dbReference type="GO" id="GO:0000287">
    <property type="term" value="F:magnesium ion binding"/>
    <property type="evidence" value="ECO:0007669"/>
    <property type="project" value="TreeGrafter"/>
</dbReference>
<dbReference type="GO" id="GO:0015095">
    <property type="term" value="F:magnesium ion transmembrane transporter activity"/>
    <property type="evidence" value="ECO:0007669"/>
    <property type="project" value="TreeGrafter"/>
</dbReference>
<dbReference type="GO" id="GO:0005385">
    <property type="term" value="F:zinc ion transmembrane transporter activity"/>
    <property type="evidence" value="ECO:0007669"/>
    <property type="project" value="UniProtKB-UniRule"/>
</dbReference>
<dbReference type="CDD" id="cd12833">
    <property type="entry name" value="ZntB-like_1"/>
    <property type="match status" value="1"/>
</dbReference>
<dbReference type="FunFam" id="1.20.58.340:FF:000002">
    <property type="entry name" value="Zinc transport protein ZntB"/>
    <property type="match status" value="1"/>
</dbReference>
<dbReference type="FunFam" id="3.30.460.20:FF:000001">
    <property type="entry name" value="Zinc transport protein ZntB"/>
    <property type="match status" value="1"/>
</dbReference>
<dbReference type="Gene3D" id="3.30.460.20">
    <property type="entry name" value="CorA soluble domain-like"/>
    <property type="match status" value="1"/>
</dbReference>
<dbReference type="Gene3D" id="1.20.58.340">
    <property type="entry name" value="Magnesium transport protein CorA, transmembrane region"/>
    <property type="match status" value="2"/>
</dbReference>
<dbReference type="HAMAP" id="MF_01565">
    <property type="entry name" value="ZntB"/>
    <property type="match status" value="1"/>
</dbReference>
<dbReference type="InterPro" id="IPR045861">
    <property type="entry name" value="CorA_cytoplasmic_dom"/>
</dbReference>
<dbReference type="InterPro" id="IPR045863">
    <property type="entry name" value="CorA_TM1_TM2"/>
</dbReference>
<dbReference type="InterPro" id="IPR002523">
    <property type="entry name" value="MgTranspt_CorA/ZnTranspt_ZntB"/>
</dbReference>
<dbReference type="InterPro" id="IPR023714">
    <property type="entry name" value="Zn_transp_ZntB"/>
</dbReference>
<dbReference type="NCBIfam" id="NF007092">
    <property type="entry name" value="PRK09546.1"/>
    <property type="match status" value="1"/>
</dbReference>
<dbReference type="PANTHER" id="PTHR46494">
    <property type="entry name" value="CORA FAMILY METAL ION TRANSPORTER (EUROFUNG)"/>
    <property type="match status" value="1"/>
</dbReference>
<dbReference type="PANTHER" id="PTHR46494:SF3">
    <property type="entry name" value="ZINC TRANSPORT PROTEIN ZNTB"/>
    <property type="match status" value="1"/>
</dbReference>
<dbReference type="Pfam" id="PF01544">
    <property type="entry name" value="CorA"/>
    <property type="match status" value="1"/>
</dbReference>
<dbReference type="SUPFAM" id="SSF143865">
    <property type="entry name" value="CorA soluble domain-like"/>
    <property type="match status" value="1"/>
</dbReference>
<dbReference type="SUPFAM" id="SSF144083">
    <property type="entry name" value="Magnesium transport protein CorA, transmembrane region"/>
    <property type="match status" value="1"/>
</dbReference>
<feature type="chain" id="PRO_1000189729" description="Zinc transport protein ZntB">
    <location>
        <begin position="1"/>
        <end position="327"/>
    </location>
</feature>
<feature type="topological domain" description="Cytoplasmic" evidence="1">
    <location>
        <begin position="1"/>
        <end position="273"/>
    </location>
</feature>
<feature type="transmembrane region" description="Helical" evidence="1">
    <location>
        <begin position="274"/>
        <end position="294"/>
    </location>
</feature>
<feature type="topological domain" description="Periplasmic" evidence="1">
    <location>
        <begin position="295"/>
        <end position="300"/>
    </location>
</feature>
<feature type="transmembrane region" description="Helical" evidence="1">
    <location>
        <begin position="301"/>
        <end position="321"/>
    </location>
</feature>
<feature type="topological domain" description="Cytoplasmic" evidence="1">
    <location>
        <begin position="322"/>
        <end position="327"/>
    </location>
</feature>
<reference key="1">
    <citation type="journal article" date="2009" name="BMC Genomics">
        <title>Pseudogene accumulation in the evolutionary histories of Salmonella enterica serovars Paratyphi A and Typhi.</title>
        <authorList>
            <person name="Holt K.E."/>
            <person name="Thomson N.R."/>
            <person name="Wain J."/>
            <person name="Langridge G.C."/>
            <person name="Hasan R."/>
            <person name="Bhutta Z.A."/>
            <person name="Quail M.A."/>
            <person name="Norbertczak H."/>
            <person name="Walker D."/>
            <person name="Simmonds M."/>
            <person name="White B."/>
            <person name="Bason N."/>
            <person name="Mungall K."/>
            <person name="Dougan G."/>
            <person name="Parkhill J."/>
        </authorList>
    </citation>
    <scope>NUCLEOTIDE SEQUENCE [LARGE SCALE GENOMIC DNA]</scope>
    <source>
        <strain>AKU_12601</strain>
    </source>
</reference>
<comment type="function">
    <text evidence="1">Zinc transporter. Acts as a Zn(2+):proton symporter, which likely mediates zinc ion uptake.</text>
</comment>
<comment type="catalytic activity">
    <reaction evidence="1">
        <text>Zn(2+)(out) + H(+)(out) = Zn(2+)(in) + H(+)(in)</text>
        <dbReference type="Rhea" id="RHEA:71195"/>
        <dbReference type="ChEBI" id="CHEBI:15378"/>
        <dbReference type="ChEBI" id="CHEBI:29105"/>
    </reaction>
    <physiologicalReaction direction="left-to-right" evidence="1">
        <dbReference type="Rhea" id="RHEA:71196"/>
    </physiologicalReaction>
</comment>
<comment type="subcellular location">
    <subcellularLocation>
        <location evidence="1">Cell inner membrane</location>
        <topology evidence="1">Multi-pass membrane protein</topology>
    </subcellularLocation>
</comment>
<comment type="similarity">
    <text evidence="1">Belongs to the CorA metal ion transporter (MIT) (TC 1.A.35) family.</text>
</comment>
<keyword id="KW-0997">Cell inner membrane</keyword>
<keyword id="KW-1003">Cell membrane</keyword>
<keyword id="KW-0406">Ion transport</keyword>
<keyword id="KW-0472">Membrane</keyword>
<keyword id="KW-0812">Transmembrane</keyword>
<keyword id="KW-1133">Transmembrane helix</keyword>
<keyword id="KW-0813">Transport</keyword>
<keyword id="KW-0862">Zinc</keyword>